<organism>
    <name type="scientific">Drosophila melanogaster</name>
    <name type="common">Fruit fly</name>
    <dbReference type="NCBI Taxonomy" id="7227"/>
    <lineage>
        <taxon>Eukaryota</taxon>
        <taxon>Metazoa</taxon>
        <taxon>Ecdysozoa</taxon>
        <taxon>Arthropoda</taxon>
        <taxon>Hexapoda</taxon>
        <taxon>Insecta</taxon>
        <taxon>Pterygota</taxon>
        <taxon>Neoptera</taxon>
        <taxon>Endopterygota</taxon>
        <taxon>Diptera</taxon>
        <taxon>Brachycera</taxon>
        <taxon>Muscomorpha</taxon>
        <taxon>Ephydroidea</taxon>
        <taxon>Drosophilidae</taxon>
        <taxon>Drosophila</taxon>
        <taxon>Sophophora</taxon>
    </lineage>
</organism>
<sequence length="470" mass="53210">MGVPTSDWIYWCRLCARDDVVYKVRERDDDLVRIISKCFDVEMTLEEPELGSMLCEECYSVIGQLITFSDSVSKVQAIFELLRHSEPQDSQDLDALRLEYGLPPACKQDLEFLDIDDTEDRCSLVEELTISDHSTSPSPDFEAQTVRTRANLKQCNSDPKVLASPTASIPEVETKRSRRQQFAAKRNSKVYTATESDDEEAILDEDEAVSPPPLKRKRGRPKGSGKQKNVDDSDNVTSREPDDNAKSKQDDKTSELSMSPHGSQSSNFVDYPCKICNETFMSFMALRRHKHDMHGGPKKYVCDHCGKGLKTFTSLVEHQLVHTEEKPCICPVCNAGFKNKARLRVHSQTHGEPKFECNVCGKKLQTRAILNKHKYVHTDERRFKCEVCGSGCKNSTALKIHLLGHTGLRPYVCKYCGKAFASNTNCRSHKWKKHPELASKEDETESSRVPVPTLEELRAITREMAKAKQD</sequence>
<dbReference type="EMBL" id="AE014134">
    <property type="protein sequence ID" value="AAF53484.1"/>
    <property type="molecule type" value="Genomic_DNA"/>
</dbReference>
<dbReference type="EMBL" id="AY051673">
    <property type="protein sequence ID" value="AAK93097.1"/>
    <property type="molecule type" value="mRNA"/>
</dbReference>
<dbReference type="RefSeq" id="NP_001260472.1">
    <property type="nucleotide sequence ID" value="NM_001273543.1"/>
</dbReference>
<dbReference type="RefSeq" id="NP_524930.1">
    <property type="nucleotide sequence ID" value="NM_080191.3"/>
</dbReference>
<dbReference type="SMR" id="Q9VJN5"/>
<dbReference type="BioGRID" id="71683">
    <property type="interactions" value="32"/>
</dbReference>
<dbReference type="FunCoup" id="Q9VJN5">
    <property type="interactions" value="408"/>
</dbReference>
<dbReference type="IntAct" id="Q9VJN5">
    <property type="interactions" value="6"/>
</dbReference>
<dbReference type="STRING" id="7227.FBpp0303719"/>
<dbReference type="iPTMnet" id="Q9VJN5"/>
<dbReference type="PaxDb" id="7227-FBpp0303719"/>
<dbReference type="DNASU" id="48785"/>
<dbReference type="EnsemblMetazoa" id="FBtr0080764">
    <property type="protein sequence ID" value="FBpp0080323"/>
    <property type="gene ID" value="FBgn0001990"/>
</dbReference>
<dbReference type="EnsemblMetazoa" id="FBtr0331282">
    <property type="protein sequence ID" value="FBpp0303719"/>
    <property type="gene ID" value="FBgn0001990"/>
</dbReference>
<dbReference type="GeneID" id="48785"/>
<dbReference type="KEGG" id="dme:Dmel_CG4148"/>
<dbReference type="UCSC" id="CG4148-RA">
    <property type="organism name" value="d. melanogaster"/>
</dbReference>
<dbReference type="AGR" id="FB:FBgn0001990"/>
<dbReference type="CTD" id="48785"/>
<dbReference type="FlyBase" id="FBgn0001990">
    <property type="gene designation" value="wek"/>
</dbReference>
<dbReference type="VEuPathDB" id="VectorBase:FBgn0001990"/>
<dbReference type="eggNOG" id="KOG1721">
    <property type="taxonomic scope" value="Eukaryota"/>
</dbReference>
<dbReference type="GeneTree" id="ENSGT00940000167118"/>
<dbReference type="HOGENOM" id="CLU_002678_94_14_1"/>
<dbReference type="InParanoid" id="Q9VJN5"/>
<dbReference type="OMA" id="EPSYECE"/>
<dbReference type="OrthoDB" id="6077919at2759"/>
<dbReference type="PhylomeDB" id="Q9VJN5"/>
<dbReference type="Reactome" id="R-DME-212436">
    <property type="pathway name" value="Generic Transcription Pathway"/>
</dbReference>
<dbReference type="Reactome" id="R-DME-214842">
    <property type="pathway name" value="DL and DIF homodimers bind to TUB and phosphorylated PLL in the TL receptor 'signalling complex'"/>
</dbReference>
<dbReference type="Reactome" id="R-DME-214844">
    <property type="pathway name" value="DL and DIF homodimers complexed with CACT are all phosphorylated in the TL receptor 'signalling complex'"/>
</dbReference>
<dbReference type="Reactome" id="R-DME-214862">
    <property type="pathway name" value="Activated PLL kinase is autophosphorylated in the TL receptor 'signalling complex'"/>
</dbReference>
<dbReference type="Reactome" id="R-DME-214863">
    <property type="pathway name" value="Adaptor protein complex binds to TL receptor at the plasma membrane"/>
</dbReference>
<dbReference type="Reactome" id="R-DME-214869">
    <property type="pathway name" value="Phosphorylated CACT, DL and DIF homodimers dissociate from the TL receptor 'signalling complex'"/>
</dbReference>
<dbReference type="Reactome" id="R-DME-214874">
    <property type="pathway name" value="PLL kinase binds to TUB in the TL receptor 'signalling complex'"/>
</dbReference>
<dbReference type="BioGRID-ORCS" id="48785">
    <property type="hits" value="0 hits in 1 CRISPR screen"/>
</dbReference>
<dbReference type="GenomeRNAi" id="48785"/>
<dbReference type="PRO" id="PR:Q9VJN5"/>
<dbReference type="Proteomes" id="UP000000803">
    <property type="component" value="Chromosome 2L"/>
</dbReference>
<dbReference type="Bgee" id="FBgn0001990">
    <property type="expression patterns" value="Expressed in proximal medullary amacrine neuron (Drosophila) in brain and 77 other cell types or tissues"/>
</dbReference>
<dbReference type="ExpressionAtlas" id="Q9VJN5">
    <property type="expression patterns" value="baseline and differential"/>
</dbReference>
<dbReference type="GO" id="GO:0009898">
    <property type="term" value="C:cytoplasmic side of plasma membrane"/>
    <property type="evidence" value="ECO:0000314"/>
    <property type="project" value="FlyBase"/>
</dbReference>
<dbReference type="GO" id="GO:0005829">
    <property type="term" value="C:cytosol"/>
    <property type="evidence" value="ECO:0000304"/>
    <property type="project" value="Reactome"/>
</dbReference>
<dbReference type="GO" id="GO:0005634">
    <property type="term" value="C:nucleus"/>
    <property type="evidence" value="ECO:0000314"/>
    <property type="project" value="FlyBase"/>
</dbReference>
<dbReference type="GO" id="GO:0042803">
    <property type="term" value="F:protein homodimerization activity"/>
    <property type="evidence" value="ECO:0000314"/>
    <property type="project" value="FlyBase"/>
</dbReference>
<dbReference type="GO" id="GO:0035591">
    <property type="term" value="F:signaling adaptor activity"/>
    <property type="evidence" value="ECO:0000314"/>
    <property type="project" value="FlyBase"/>
</dbReference>
<dbReference type="GO" id="GO:0008270">
    <property type="term" value="F:zinc ion binding"/>
    <property type="evidence" value="ECO:0007669"/>
    <property type="project" value="UniProtKB-KW"/>
</dbReference>
<dbReference type="GO" id="GO:0009950">
    <property type="term" value="P:dorsal/ventral axis specification"/>
    <property type="evidence" value="ECO:0000315"/>
    <property type="project" value="FlyBase"/>
</dbReference>
<dbReference type="GO" id="GO:0007311">
    <property type="term" value="P:maternal specification of dorsal/ventral axis, oocyte, germ-line encoded"/>
    <property type="evidence" value="ECO:0007001"/>
    <property type="project" value="FlyBase"/>
</dbReference>
<dbReference type="GO" id="GO:0008063">
    <property type="term" value="P:Toll signaling pathway"/>
    <property type="evidence" value="ECO:0000315"/>
    <property type="project" value="FlyBase"/>
</dbReference>
<dbReference type="FunFam" id="3.30.160.60:FF:002290">
    <property type="entry name" value="Weckle, isoform B"/>
    <property type="match status" value="1"/>
</dbReference>
<dbReference type="FunFam" id="3.30.160.60:FF:000688">
    <property type="entry name" value="zinc finger protein 197 isoform X1"/>
    <property type="match status" value="1"/>
</dbReference>
<dbReference type="Gene3D" id="3.40.1800.20">
    <property type="match status" value="1"/>
</dbReference>
<dbReference type="Gene3D" id="3.30.160.60">
    <property type="entry name" value="Classic Zinc Finger"/>
    <property type="match status" value="5"/>
</dbReference>
<dbReference type="InterPro" id="IPR012934">
    <property type="entry name" value="Znf_AD"/>
</dbReference>
<dbReference type="InterPro" id="IPR036236">
    <property type="entry name" value="Znf_C2H2_sf"/>
</dbReference>
<dbReference type="InterPro" id="IPR013087">
    <property type="entry name" value="Znf_C2H2_type"/>
</dbReference>
<dbReference type="PANTHER" id="PTHR24379">
    <property type="entry name" value="KRAB AND ZINC FINGER DOMAIN-CONTAINING"/>
    <property type="match status" value="1"/>
</dbReference>
<dbReference type="PANTHER" id="PTHR24379:SF117">
    <property type="entry name" value="ZINC FINGER PROTEIN WECKLE"/>
    <property type="match status" value="1"/>
</dbReference>
<dbReference type="Pfam" id="PF07776">
    <property type="entry name" value="zf-AD"/>
    <property type="match status" value="1"/>
</dbReference>
<dbReference type="Pfam" id="PF00096">
    <property type="entry name" value="zf-C2H2"/>
    <property type="match status" value="1"/>
</dbReference>
<dbReference type="Pfam" id="PF13912">
    <property type="entry name" value="zf-C2H2_6"/>
    <property type="match status" value="3"/>
</dbReference>
<dbReference type="SMART" id="SM00868">
    <property type="entry name" value="zf-AD"/>
    <property type="match status" value="1"/>
</dbReference>
<dbReference type="SMART" id="SM00355">
    <property type="entry name" value="ZnF_C2H2"/>
    <property type="match status" value="6"/>
</dbReference>
<dbReference type="SUPFAM" id="SSF57667">
    <property type="entry name" value="beta-beta-alpha zinc fingers"/>
    <property type="match status" value="2"/>
</dbReference>
<dbReference type="SUPFAM" id="SSF57716">
    <property type="entry name" value="Glucocorticoid receptor-like (DNA-binding domain)"/>
    <property type="match status" value="1"/>
</dbReference>
<dbReference type="PROSITE" id="PS51915">
    <property type="entry name" value="ZAD"/>
    <property type="match status" value="1"/>
</dbReference>
<dbReference type="PROSITE" id="PS00028">
    <property type="entry name" value="ZINC_FINGER_C2H2_1"/>
    <property type="match status" value="6"/>
</dbReference>
<dbReference type="PROSITE" id="PS50157">
    <property type="entry name" value="ZINC_FINGER_C2H2_2"/>
    <property type="match status" value="6"/>
</dbReference>
<reference evidence="8" key="1">
    <citation type="journal article" date="2000" name="Science">
        <title>The genome sequence of Drosophila melanogaster.</title>
        <authorList>
            <person name="Adams M.D."/>
            <person name="Celniker S.E."/>
            <person name="Holt R.A."/>
            <person name="Evans C.A."/>
            <person name="Gocayne J.D."/>
            <person name="Amanatides P.G."/>
            <person name="Scherer S.E."/>
            <person name="Li P.W."/>
            <person name="Hoskins R.A."/>
            <person name="Galle R.F."/>
            <person name="George R.A."/>
            <person name="Lewis S.E."/>
            <person name="Richards S."/>
            <person name="Ashburner M."/>
            <person name="Henderson S.N."/>
            <person name="Sutton G.G."/>
            <person name="Wortman J.R."/>
            <person name="Yandell M.D."/>
            <person name="Zhang Q."/>
            <person name="Chen L.X."/>
            <person name="Brandon R.C."/>
            <person name="Rogers Y.-H.C."/>
            <person name="Blazej R.G."/>
            <person name="Champe M."/>
            <person name="Pfeiffer B.D."/>
            <person name="Wan K.H."/>
            <person name="Doyle C."/>
            <person name="Baxter E.G."/>
            <person name="Helt G."/>
            <person name="Nelson C.R."/>
            <person name="Miklos G.L.G."/>
            <person name="Abril J.F."/>
            <person name="Agbayani A."/>
            <person name="An H.-J."/>
            <person name="Andrews-Pfannkoch C."/>
            <person name="Baldwin D."/>
            <person name="Ballew R.M."/>
            <person name="Basu A."/>
            <person name="Baxendale J."/>
            <person name="Bayraktaroglu L."/>
            <person name="Beasley E.M."/>
            <person name="Beeson K.Y."/>
            <person name="Benos P.V."/>
            <person name="Berman B.P."/>
            <person name="Bhandari D."/>
            <person name="Bolshakov S."/>
            <person name="Borkova D."/>
            <person name="Botchan M.R."/>
            <person name="Bouck J."/>
            <person name="Brokstein P."/>
            <person name="Brottier P."/>
            <person name="Burtis K.C."/>
            <person name="Busam D.A."/>
            <person name="Butler H."/>
            <person name="Cadieu E."/>
            <person name="Center A."/>
            <person name="Chandra I."/>
            <person name="Cherry J.M."/>
            <person name="Cawley S."/>
            <person name="Dahlke C."/>
            <person name="Davenport L.B."/>
            <person name="Davies P."/>
            <person name="de Pablos B."/>
            <person name="Delcher A."/>
            <person name="Deng Z."/>
            <person name="Mays A.D."/>
            <person name="Dew I."/>
            <person name="Dietz S.M."/>
            <person name="Dodson K."/>
            <person name="Doup L.E."/>
            <person name="Downes M."/>
            <person name="Dugan-Rocha S."/>
            <person name="Dunkov B.C."/>
            <person name="Dunn P."/>
            <person name="Durbin K.J."/>
            <person name="Evangelista C.C."/>
            <person name="Ferraz C."/>
            <person name="Ferriera S."/>
            <person name="Fleischmann W."/>
            <person name="Fosler C."/>
            <person name="Gabrielian A.E."/>
            <person name="Garg N.S."/>
            <person name="Gelbart W.M."/>
            <person name="Glasser K."/>
            <person name="Glodek A."/>
            <person name="Gong F."/>
            <person name="Gorrell J.H."/>
            <person name="Gu Z."/>
            <person name="Guan P."/>
            <person name="Harris M."/>
            <person name="Harris N.L."/>
            <person name="Harvey D.A."/>
            <person name="Heiman T.J."/>
            <person name="Hernandez J.R."/>
            <person name="Houck J."/>
            <person name="Hostin D."/>
            <person name="Houston K.A."/>
            <person name="Howland T.J."/>
            <person name="Wei M.-H."/>
            <person name="Ibegwam C."/>
            <person name="Jalali M."/>
            <person name="Kalush F."/>
            <person name="Karpen G.H."/>
            <person name="Ke Z."/>
            <person name="Kennison J.A."/>
            <person name="Ketchum K.A."/>
            <person name="Kimmel B.E."/>
            <person name="Kodira C.D."/>
            <person name="Kraft C.L."/>
            <person name="Kravitz S."/>
            <person name="Kulp D."/>
            <person name="Lai Z."/>
            <person name="Lasko P."/>
            <person name="Lei Y."/>
            <person name="Levitsky A.A."/>
            <person name="Li J.H."/>
            <person name="Li Z."/>
            <person name="Liang Y."/>
            <person name="Lin X."/>
            <person name="Liu X."/>
            <person name="Mattei B."/>
            <person name="McIntosh T.C."/>
            <person name="McLeod M.P."/>
            <person name="McPherson D."/>
            <person name="Merkulov G."/>
            <person name="Milshina N.V."/>
            <person name="Mobarry C."/>
            <person name="Morris J."/>
            <person name="Moshrefi A."/>
            <person name="Mount S.M."/>
            <person name="Moy M."/>
            <person name="Murphy B."/>
            <person name="Murphy L."/>
            <person name="Muzny D.M."/>
            <person name="Nelson D.L."/>
            <person name="Nelson D.R."/>
            <person name="Nelson K.A."/>
            <person name="Nixon K."/>
            <person name="Nusskern D.R."/>
            <person name="Pacleb J.M."/>
            <person name="Palazzolo M."/>
            <person name="Pittman G.S."/>
            <person name="Pan S."/>
            <person name="Pollard J."/>
            <person name="Puri V."/>
            <person name="Reese M.G."/>
            <person name="Reinert K."/>
            <person name="Remington K."/>
            <person name="Saunders R.D.C."/>
            <person name="Scheeler F."/>
            <person name="Shen H."/>
            <person name="Shue B.C."/>
            <person name="Siden-Kiamos I."/>
            <person name="Simpson M."/>
            <person name="Skupski M.P."/>
            <person name="Smith T.J."/>
            <person name="Spier E."/>
            <person name="Spradling A.C."/>
            <person name="Stapleton M."/>
            <person name="Strong R."/>
            <person name="Sun E."/>
            <person name="Svirskas R."/>
            <person name="Tector C."/>
            <person name="Turner R."/>
            <person name="Venter E."/>
            <person name="Wang A.H."/>
            <person name="Wang X."/>
            <person name="Wang Z.-Y."/>
            <person name="Wassarman D.A."/>
            <person name="Weinstock G.M."/>
            <person name="Weissenbach J."/>
            <person name="Williams S.M."/>
            <person name="Woodage T."/>
            <person name="Worley K.C."/>
            <person name="Wu D."/>
            <person name="Yang S."/>
            <person name="Yao Q.A."/>
            <person name="Ye J."/>
            <person name="Yeh R.-F."/>
            <person name="Zaveri J.S."/>
            <person name="Zhan M."/>
            <person name="Zhang G."/>
            <person name="Zhao Q."/>
            <person name="Zheng L."/>
            <person name="Zheng X.H."/>
            <person name="Zhong F.N."/>
            <person name="Zhong W."/>
            <person name="Zhou X."/>
            <person name="Zhu S.C."/>
            <person name="Zhu X."/>
            <person name="Smith H.O."/>
            <person name="Gibbs R.A."/>
            <person name="Myers E.W."/>
            <person name="Rubin G.M."/>
            <person name="Venter J.C."/>
        </authorList>
    </citation>
    <scope>NUCLEOTIDE SEQUENCE [LARGE SCALE GENOMIC DNA]</scope>
    <source>
        <strain evidence="4">Berkeley</strain>
    </source>
</reference>
<reference evidence="7 8" key="2">
    <citation type="journal article" date="2002" name="Genome Biol.">
        <title>Annotation of the Drosophila melanogaster euchromatic genome: a systematic review.</title>
        <authorList>
            <person name="Misra S."/>
            <person name="Crosby M.A."/>
            <person name="Mungall C.J."/>
            <person name="Matthews B.B."/>
            <person name="Campbell K.S."/>
            <person name="Hradecky P."/>
            <person name="Huang Y."/>
            <person name="Kaminker J.S."/>
            <person name="Millburn G.H."/>
            <person name="Prochnik S.E."/>
            <person name="Smith C.D."/>
            <person name="Tupy J.L."/>
            <person name="Whitfield E.J."/>
            <person name="Bayraktaroglu L."/>
            <person name="Berman B.P."/>
            <person name="Bettencourt B.R."/>
            <person name="Celniker S.E."/>
            <person name="de Grey A.D.N.J."/>
            <person name="Drysdale R.A."/>
            <person name="Harris N.L."/>
            <person name="Richter J."/>
            <person name="Russo S."/>
            <person name="Schroeder A.J."/>
            <person name="Shu S.Q."/>
            <person name="Stapleton M."/>
            <person name="Yamada C."/>
            <person name="Ashburner M."/>
            <person name="Gelbart W.M."/>
            <person name="Rubin G.M."/>
            <person name="Lewis S.E."/>
        </authorList>
    </citation>
    <scope>GENOME REANNOTATION</scope>
    <source>
        <strain>Berkeley</strain>
    </source>
</reference>
<reference evidence="9" key="3">
    <citation type="submission" date="2007-04" db="EMBL/GenBank/DDBJ databases">
        <authorList>
            <person name="Stapleton M."/>
            <person name="Carlson J.W."/>
            <person name="Frise E."/>
            <person name="Kapadia B."/>
            <person name="Park S."/>
            <person name="Wan K.H."/>
            <person name="Yu C."/>
            <person name="Celniker S.E."/>
        </authorList>
    </citation>
    <scope>NUCLEOTIDE SEQUENCE [LARGE SCALE MRNA]</scope>
    <source>
        <strain evidence="9">Berkeley</strain>
        <tissue>Embryo</tissue>
    </source>
</reference>
<reference evidence="7" key="4">
    <citation type="journal article" date="2006" name="Curr. Biol.">
        <title>Weckle is a zinc finger adaptor of the toll pathway in dorsoventral patterning of the Drosophila embryo.</title>
        <authorList>
            <person name="Chen L.-Y."/>
            <person name="Wang J.-C."/>
            <person name="Hyvert Y."/>
            <person name="Lin H.-P."/>
            <person name="Perrimon N."/>
            <person name="Imler J.-L."/>
            <person name="Hsu J.-C."/>
        </authorList>
    </citation>
    <scope>FUNCTION</scope>
    <scope>SUBUNIT</scope>
    <scope>INTERACTION WITH MYD88 AND TOLL</scope>
    <scope>SUBCELLULAR LOCATION</scope>
</reference>
<reference evidence="7" key="5">
    <citation type="journal article" date="2008" name="J. Proteome Res.">
        <title>Phosphoproteome analysis of Drosophila melanogaster embryos.</title>
        <authorList>
            <person name="Zhai B."/>
            <person name="Villen J."/>
            <person name="Beausoleil S.A."/>
            <person name="Mintseris J."/>
            <person name="Gygi S.P."/>
        </authorList>
    </citation>
    <scope>PHOSPHORYLATION [LARGE SCALE ANALYSIS] AT SER-168</scope>
    <scope>IDENTIFICATION BY MASS SPECTROMETRY</scope>
    <source>
        <tissue evidence="6">Embryo</tissue>
    </source>
</reference>
<gene>
    <name evidence="8 10" type="primary">wek</name>
    <name evidence="9" type="synonym">l(2)35Ea</name>
    <name type="ORF">CG4148</name>
</gene>
<evidence type="ECO:0000255" key="1">
    <source>
        <dbReference type="PROSITE-ProRule" id="PRU00042"/>
    </source>
</evidence>
<evidence type="ECO:0000255" key="2">
    <source>
        <dbReference type="PROSITE-ProRule" id="PRU01263"/>
    </source>
</evidence>
<evidence type="ECO:0000256" key="3">
    <source>
        <dbReference type="SAM" id="MobiDB-lite"/>
    </source>
</evidence>
<evidence type="ECO:0000269" key="4">
    <source>
    </source>
</evidence>
<evidence type="ECO:0000269" key="5">
    <source>
    </source>
</evidence>
<evidence type="ECO:0000269" key="6">
    <source>
    </source>
</evidence>
<evidence type="ECO:0000305" key="7"/>
<evidence type="ECO:0000312" key="8">
    <source>
        <dbReference type="EMBL" id="AAF53484.1"/>
    </source>
</evidence>
<evidence type="ECO:0000312" key="9">
    <source>
        <dbReference type="EMBL" id="AAK93097.1"/>
    </source>
</evidence>
<evidence type="ECO:0000312" key="10">
    <source>
        <dbReference type="FlyBase" id="FBgn0001990"/>
    </source>
</evidence>
<keyword id="KW-1003">Cell membrane</keyword>
<keyword id="KW-0217">Developmental protein</keyword>
<keyword id="KW-0472">Membrane</keyword>
<keyword id="KW-0479">Metal-binding</keyword>
<keyword id="KW-0597">Phosphoprotein</keyword>
<keyword id="KW-1185">Reference proteome</keyword>
<keyword id="KW-0677">Repeat</keyword>
<keyword id="KW-0862">Zinc</keyword>
<keyword id="KW-0863">Zinc-finger</keyword>
<name>WEK_DROME</name>
<comment type="function">
    <text evidence="5">Acts as an adapter to assemble/stabilize a Toll/wek/Myd88/tube complex; required for efficient recruitment of Myd88 to Toll. Dispensable for innate immune response; plays a minimal role, if any, in the immune defense against Gram-positive bacteria and fungi. Involved in dorsoventral axis determination.</text>
</comment>
<comment type="subunit">
    <text evidence="5">Homodimer. Interacts with Myd88 and Toll.</text>
</comment>
<comment type="subcellular location">
    <subcellularLocation>
        <location evidence="5">Cell membrane</location>
    </subcellularLocation>
    <text evidence="5">Localizes to the plasma membrane in embryos when bound to Myd88.</text>
</comment>
<feature type="chain" id="PRO_0000351195" description="Zinc finger protein weckle">
    <location>
        <begin position="1"/>
        <end position="470"/>
    </location>
</feature>
<feature type="domain" description="ZAD" evidence="2">
    <location>
        <begin position="10"/>
        <end position="82"/>
    </location>
</feature>
<feature type="zinc finger region" description="C2H2-type 1" evidence="1">
    <location>
        <begin position="271"/>
        <end position="294"/>
    </location>
</feature>
<feature type="zinc finger region" description="C2H2-type 2" evidence="1">
    <location>
        <begin position="300"/>
        <end position="322"/>
    </location>
</feature>
<feature type="zinc finger region" description="C2H2-type 3" evidence="1">
    <location>
        <begin position="328"/>
        <end position="350"/>
    </location>
</feature>
<feature type="zinc finger region" description="C2H2-type 4" evidence="1">
    <location>
        <begin position="355"/>
        <end position="377"/>
    </location>
</feature>
<feature type="zinc finger region" description="C2H2-type 5" evidence="1">
    <location>
        <begin position="383"/>
        <end position="405"/>
    </location>
</feature>
<feature type="zinc finger region" description="C2H2-type 6" evidence="1">
    <location>
        <begin position="411"/>
        <end position="434"/>
    </location>
</feature>
<feature type="region of interest" description="Required for homodimerization" evidence="5">
    <location>
        <begin position="1"/>
        <end position="103"/>
    </location>
</feature>
<feature type="region of interest" description="Disordered" evidence="3">
    <location>
        <begin position="156"/>
        <end position="265"/>
    </location>
</feature>
<feature type="compositionally biased region" description="Acidic residues" evidence="3">
    <location>
        <begin position="195"/>
        <end position="208"/>
    </location>
</feature>
<feature type="compositionally biased region" description="Basic residues" evidence="3">
    <location>
        <begin position="214"/>
        <end position="225"/>
    </location>
</feature>
<feature type="compositionally biased region" description="Basic and acidic residues" evidence="3">
    <location>
        <begin position="237"/>
        <end position="254"/>
    </location>
</feature>
<feature type="compositionally biased region" description="Polar residues" evidence="3">
    <location>
        <begin position="255"/>
        <end position="265"/>
    </location>
</feature>
<feature type="binding site" evidence="2">
    <location>
        <position position="12"/>
    </location>
    <ligand>
        <name>Zn(2+)</name>
        <dbReference type="ChEBI" id="CHEBI:29105"/>
    </ligand>
</feature>
<feature type="binding site" evidence="2">
    <location>
        <position position="15"/>
    </location>
    <ligand>
        <name>Zn(2+)</name>
        <dbReference type="ChEBI" id="CHEBI:29105"/>
    </ligand>
</feature>
<feature type="binding site" evidence="2">
    <location>
        <position position="55"/>
    </location>
    <ligand>
        <name>Zn(2+)</name>
        <dbReference type="ChEBI" id="CHEBI:29105"/>
    </ligand>
</feature>
<feature type="binding site" evidence="2">
    <location>
        <position position="58"/>
    </location>
    <ligand>
        <name>Zn(2+)</name>
        <dbReference type="ChEBI" id="CHEBI:29105"/>
    </ligand>
</feature>
<feature type="modified residue" description="Phosphoserine" evidence="6">
    <location>
        <position position="168"/>
    </location>
</feature>
<proteinExistence type="evidence at protein level"/>
<accession>Q9VJN5</accession>
<protein>
    <recommendedName>
        <fullName>Zinc finger protein weckle</fullName>
    </recommendedName>
</protein>